<organism>
    <name type="scientific">Synechococcus sp. (strain RCC307)</name>
    <dbReference type="NCBI Taxonomy" id="316278"/>
    <lineage>
        <taxon>Bacteria</taxon>
        <taxon>Bacillati</taxon>
        <taxon>Cyanobacteriota</taxon>
        <taxon>Cyanophyceae</taxon>
        <taxon>Synechococcales</taxon>
        <taxon>Synechococcaceae</taxon>
        <taxon>Synechococcus</taxon>
    </lineage>
</organism>
<reference key="1">
    <citation type="submission" date="2006-05" db="EMBL/GenBank/DDBJ databases">
        <authorList>
            <consortium name="Genoscope"/>
        </authorList>
    </citation>
    <scope>NUCLEOTIDE SEQUENCE [LARGE SCALE GENOMIC DNA]</scope>
    <source>
        <strain>RCC307</strain>
    </source>
</reference>
<accession>A5GPX1</accession>
<dbReference type="EC" id="6.3.2.8" evidence="1"/>
<dbReference type="EMBL" id="CT978603">
    <property type="protein sequence ID" value="CAK26930.1"/>
    <property type="molecule type" value="Genomic_DNA"/>
</dbReference>
<dbReference type="SMR" id="A5GPX1"/>
<dbReference type="STRING" id="316278.SynRCC307_0027"/>
<dbReference type="KEGG" id="syr:SynRCC307_0027"/>
<dbReference type="eggNOG" id="COG0773">
    <property type="taxonomic scope" value="Bacteria"/>
</dbReference>
<dbReference type="HOGENOM" id="CLU_028104_2_2_3"/>
<dbReference type="OrthoDB" id="9804126at2"/>
<dbReference type="UniPathway" id="UPA00219"/>
<dbReference type="Proteomes" id="UP000001115">
    <property type="component" value="Chromosome"/>
</dbReference>
<dbReference type="GO" id="GO:0005737">
    <property type="term" value="C:cytoplasm"/>
    <property type="evidence" value="ECO:0007669"/>
    <property type="project" value="UniProtKB-SubCell"/>
</dbReference>
<dbReference type="GO" id="GO:0005524">
    <property type="term" value="F:ATP binding"/>
    <property type="evidence" value="ECO:0007669"/>
    <property type="project" value="UniProtKB-UniRule"/>
</dbReference>
<dbReference type="GO" id="GO:0008763">
    <property type="term" value="F:UDP-N-acetylmuramate-L-alanine ligase activity"/>
    <property type="evidence" value="ECO:0007669"/>
    <property type="project" value="UniProtKB-UniRule"/>
</dbReference>
<dbReference type="GO" id="GO:0051301">
    <property type="term" value="P:cell division"/>
    <property type="evidence" value="ECO:0007669"/>
    <property type="project" value="UniProtKB-KW"/>
</dbReference>
<dbReference type="GO" id="GO:0071555">
    <property type="term" value="P:cell wall organization"/>
    <property type="evidence" value="ECO:0007669"/>
    <property type="project" value="UniProtKB-KW"/>
</dbReference>
<dbReference type="GO" id="GO:0009252">
    <property type="term" value="P:peptidoglycan biosynthetic process"/>
    <property type="evidence" value="ECO:0007669"/>
    <property type="project" value="UniProtKB-UniRule"/>
</dbReference>
<dbReference type="GO" id="GO:0008360">
    <property type="term" value="P:regulation of cell shape"/>
    <property type="evidence" value="ECO:0007669"/>
    <property type="project" value="UniProtKB-KW"/>
</dbReference>
<dbReference type="Gene3D" id="3.90.190.20">
    <property type="entry name" value="Mur ligase, C-terminal domain"/>
    <property type="match status" value="1"/>
</dbReference>
<dbReference type="Gene3D" id="3.40.1190.10">
    <property type="entry name" value="Mur-like, catalytic domain"/>
    <property type="match status" value="1"/>
</dbReference>
<dbReference type="Gene3D" id="3.40.50.720">
    <property type="entry name" value="NAD(P)-binding Rossmann-like Domain"/>
    <property type="match status" value="1"/>
</dbReference>
<dbReference type="HAMAP" id="MF_00046">
    <property type="entry name" value="MurC"/>
    <property type="match status" value="1"/>
</dbReference>
<dbReference type="InterPro" id="IPR036565">
    <property type="entry name" value="Mur-like_cat_sf"/>
</dbReference>
<dbReference type="InterPro" id="IPR004101">
    <property type="entry name" value="Mur_ligase_C"/>
</dbReference>
<dbReference type="InterPro" id="IPR036615">
    <property type="entry name" value="Mur_ligase_C_dom_sf"/>
</dbReference>
<dbReference type="InterPro" id="IPR013221">
    <property type="entry name" value="Mur_ligase_cen"/>
</dbReference>
<dbReference type="InterPro" id="IPR000713">
    <property type="entry name" value="Mur_ligase_N"/>
</dbReference>
<dbReference type="InterPro" id="IPR050061">
    <property type="entry name" value="MurCDEF_pg_biosynth"/>
</dbReference>
<dbReference type="InterPro" id="IPR005758">
    <property type="entry name" value="UDP-N-AcMur_Ala_ligase_MurC"/>
</dbReference>
<dbReference type="NCBIfam" id="TIGR01082">
    <property type="entry name" value="murC"/>
    <property type="match status" value="1"/>
</dbReference>
<dbReference type="PANTHER" id="PTHR43445:SF3">
    <property type="entry name" value="UDP-N-ACETYLMURAMATE--L-ALANINE LIGASE"/>
    <property type="match status" value="1"/>
</dbReference>
<dbReference type="PANTHER" id="PTHR43445">
    <property type="entry name" value="UDP-N-ACETYLMURAMATE--L-ALANINE LIGASE-RELATED"/>
    <property type="match status" value="1"/>
</dbReference>
<dbReference type="Pfam" id="PF01225">
    <property type="entry name" value="Mur_ligase"/>
    <property type="match status" value="1"/>
</dbReference>
<dbReference type="Pfam" id="PF02875">
    <property type="entry name" value="Mur_ligase_C"/>
    <property type="match status" value="1"/>
</dbReference>
<dbReference type="Pfam" id="PF08245">
    <property type="entry name" value="Mur_ligase_M"/>
    <property type="match status" value="1"/>
</dbReference>
<dbReference type="SUPFAM" id="SSF51984">
    <property type="entry name" value="MurCD N-terminal domain"/>
    <property type="match status" value="1"/>
</dbReference>
<dbReference type="SUPFAM" id="SSF53623">
    <property type="entry name" value="MurD-like peptide ligases, catalytic domain"/>
    <property type="match status" value="1"/>
</dbReference>
<dbReference type="SUPFAM" id="SSF53244">
    <property type="entry name" value="MurD-like peptide ligases, peptide-binding domain"/>
    <property type="match status" value="1"/>
</dbReference>
<evidence type="ECO:0000255" key="1">
    <source>
        <dbReference type="HAMAP-Rule" id="MF_00046"/>
    </source>
</evidence>
<protein>
    <recommendedName>
        <fullName evidence="1">UDP-N-acetylmuramate--L-alanine ligase</fullName>
        <ecNumber evidence="1">6.3.2.8</ecNumber>
    </recommendedName>
    <alternativeName>
        <fullName evidence="1">UDP-N-acetylmuramoyl-L-alanine synthetase</fullName>
    </alternativeName>
</protein>
<name>MURC_SYNR3</name>
<keyword id="KW-0067">ATP-binding</keyword>
<keyword id="KW-0131">Cell cycle</keyword>
<keyword id="KW-0132">Cell division</keyword>
<keyword id="KW-0133">Cell shape</keyword>
<keyword id="KW-0961">Cell wall biogenesis/degradation</keyword>
<keyword id="KW-0963">Cytoplasm</keyword>
<keyword id="KW-0436">Ligase</keyword>
<keyword id="KW-0547">Nucleotide-binding</keyword>
<keyword id="KW-0573">Peptidoglycan synthesis</keyword>
<keyword id="KW-1185">Reference proteome</keyword>
<sequence length="479" mass="50457">MSQPLSLTAEQPVHFIGVGGIGMSAIAGILAERSYNVTGSDPKQSAQSQLLRQQGARVFQQQNAATIDAICSGVDRAPLVVVSSAIPETNPELEAARGAGLRVVHRSELLAWLINAQHSIAVAGSHGKTTTSSLIASLLHSAGLDPTAIIGGVVPAFGSNARNGAGEWLVAEADESDGSLVRFHPQLGLITNLELDHTDHYPNLDALVATMRRFSGNCSSVLANRDCPVLSAELSADHWWSLQENSSAHFRAVPLSLDGAGCRADYLEDGRRLGELALPMAGIHNLSNALAAVAACRLAGASFADLQAALTELVPPGRRFDLRGEWQGRLIVDDYAHHPSEVDATLTMAQLMVSSGKSTLPWVPKRVVAVFQPHRYSRTAQFMERFAEALGCADEVLVAPLYSAGESAIEGVSSATLAEKVQQAGHSARALADMDSLVDAVQQCSSAGDLVLVMGAGDVNQLWSRLQSSADQQGLATAA</sequence>
<gene>
    <name evidence="1" type="primary">murC</name>
    <name type="ordered locus">SynRCC307_0027</name>
</gene>
<feature type="chain" id="PRO_0000336871" description="UDP-N-acetylmuramate--L-alanine ligase">
    <location>
        <begin position="1"/>
        <end position="479"/>
    </location>
</feature>
<feature type="binding site" evidence="1">
    <location>
        <begin position="124"/>
        <end position="130"/>
    </location>
    <ligand>
        <name>ATP</name>
        <dbReference type="ChEBI" id="CHEBI:30616"/>
    </ligand>
</feature>
<proteinExistence type="inferred from homology"/>
<comment type="function">
    <text evidence="1">Cell wall formation.</text>
</comment>
<comment type="catalytic activity">
    <reaction evidence="1">
        <text>UDP-N-acetyl-alpha-D-muramate + L-alanine + ATP = UDP-N-acetyl-alpha-D-muramoyl-L-alanine + ADP + phosphate + H(+)</text>
        <dbReference type="Rhea" id="RHEA:23372"/>
        <dbReference type="ChEBI" id="CHEBI:15378"/>
        <dbReference type="ChEBI" id="CHEBI:30616"/>
        <dbReference type="ChEBI" id="CHEBI:43474"/>
        <dbReference type="ChEBI" id="CHEBI:57972"/>
        <dbReference type="ChEBI" id="CHEBI:70757"/>
        <dbReference type="ChEBI" id="CHEBI:83898"/>
        <dbReference type="ChEBI" id="CHEBI:456216"/>
        <dbReference type="EC" id="6.3.2.8"/>
    </reaction>
</comment>
<comment type="pathway">
    <text evidence="1">Cell wall biogenesis; peptidoglycan biosynthesis.</text>
</comment>
<comment type="subcellular location">
    <subcellularLocation>
        <location evidence="1">Cytoplasm</location>
    </subcellularLocation>
</comment>
<comment type="similarity">
    <text evidence="1">Belongs to the MurCDEF family.</text>
</comment>